<proteinExistence type="predicted"/>
<name>YPZ7_METTF</name>
<keyword id="KW-0614">Plasmid</keyword>
<protein>
    <recommendedName>
        <fullName>Uncharacterized protein ORF7'</fullName>
    </recommendedName>
</protein>
<accession>P29583</accession>
<dbReference type="EMBL" id="X68367">
    <property type="protein sequence ID" value="CAA48448.1"/>
    <property type="molecule type" value="Genomic_DNA"/>
</dbReference>
<dbReference type="PIR" id="S30323">
    <property type="entry name" value="S26457"/>
</dbReference>
<dbReference type="RefSeq" id="NP_039776.1">
    <property type="nucleotide sequence ID" value="NC_001337.1"/>
</dbReference>
<dbReference type="RefSeq" id="WP_010889863.1">
    <property type="nucleotide sequence ID" value="NC_001337.1"/>
</dbReference>
<dbReference type="SMR" id="P29583"/>
<reference key="1">
    <citation type="journal article" date="1992" name="Nucleic Acids Res.">
        <title>Modular organization of related Archaeal plasmids encoding different restriction-modification systems in Methanobacterium thermoformicicum.</title>
        <authorList>
            <person name="Noelling J."/>
            <person name="van Eeden F.J.M."/>
            <person name="Eggen R.I.L."/>
            <person name="de Vos W.M."/>
        </authorList>
    </citation>
    <scope>NUCLEOTIDE SEQUENCE [GENOMIC DNA]</scope>
    <source>
        <strain>DSM 3720 / Z-245</strain>
    </source>
</reference>
<feature type="chain" id="PRO_0000066441" description="Uncharacterized protein ORF7'">
    <location>
        <begin position="1"/>
        <end position="80"/>
    </location>
</feature>
<sequence>MTMTIKEKTELQDQIDELQVEFNKLQNKYKHIKSLLDKKEREVNYLENEVKRLQNRGIIEILLEKLRKKKAIEGEVEYSR</sequence>
<geneLocation type="plasmid">
    <name>pFZ1</name>
</geneLocation>
<organism>
    <name type="scientific">Methanothermobacter thermautotrophicus</name>
    <name type="common">Methanobacterium thermoformicicum</name>
    <dbReference type="NCBI Taxonomy" id="145262"/>
    <lineage>
        <taxon>Archaea</taxon>
        <taxon>Methanobacteriati</taxon>
        <taxon>Methanobacteriota</taxon>
        <taxon>Methanomada group</taxon>
        <taxon>Methanobacteria</taxon>
        <taxon>Methanobacteriales</taxon>
        <taxon>Methanobacteriaceae</taxon>
        <taxon>Methanothermobacter</taxon>
    </lineage>
</organism>